<proteinExistence type="evidence at protein level"/>
<name>ADA29_HUMAN</name>
<gene>
    <name type="primary">ADAM29</name>
</gene>
<sequence>MKMLLLLHCLGVFLSCSGHIQDEHPQYHSPPDVVIPVRITGTTRGMTPPGWLSYILPFGGQKHIIHIKVKKLLFSKHLPVFTYTDQGAILEDQPFVQNNCYYHGYVEGDPESLVSLSTCFGGFQGILQINDFAYEIKPLAFSTTFEHLVYKMDSEEKQFSTMRSGFMQNEITCRMEFEEIDNSTQKQSSYVGWWIHFRIVEIVVVIDNYLYIRYERNDSKLLEDLYVIVNIVDSILDVIGVKVLLFGLEIWTNKNLIVVDDVRKSVHLYCKWKSENITPRMQHDTSHLFTTLGLRGLSGIGAFRGMCTPHRSCAIVTFMNKTLGTFSIAVAHHLGHNLGMNHDEDTCRCSQPRCIMHEGNPPITKFSNCSYGDFWEYTVERTKCLLETVHTKDIFNVKRCGNGVVEEGEECDCGPLKHCAKDPCCLSNCTLTDGSTCAFGLCCKDCKFLPSGKVCRKEVNECDLPEWCNGTSHKCPDDFYVEDGIPCKERGYCYEKSCHDRNEQCRRIFGAGANTASETCYKELNTLGDRVGHCGIKNATYIKCNISDVQCGRIQCENVTEIPNMSDHTTVHWARFNDIMCWSTDYHLGMKGPDIGEVKDGTECGIDHICIHRHCVHITILNSNCSPAFCNKRGICNNKHHCHCNYLWDPPNCLIKGYGGSVDSGPPPKRKKKKKFCYLCILLLIVLFILLCCLYRLCKKSKPIKKQQDVQTPSAKEEEKIQRRPHELPPQSQPWVMPSQSQPPVTPSQSHPQVMPSQSQPPVTPSQSQPRVMPSQSQPPVMPSQSHPQLTPSQSQPPVTPSQRQPQLMPSQSQPPVTPS</sequence>
<protein>
    <recommendedName>
        <fullName>Disintegrin and metalloproteinase domain-containing protein 29</fullName>
        <shortName>ADAM 29</shortName>
    </recommendedName>
    <alternativeName>
        <fullName>Cancer/testis antigen 73</fullName>
        <shortName>CT73</shortName>
    </alternativeName>
</protein>
<keyword id="KW-0025">Alternative splicing</keyword>
<keyword id="KW-1015">Disulfide bond</keyword>
<keyword id="KW-0245">EGF-like domain</keyword>
<keyword id="KW-0325">Glycoprotein</keyword>
<keyword id="KW-0472">Membrane</keyword>
<keyword id="KW-1267">Proteomics identification</keyword>
<keyword id="KW-1185">Reference proteome</keyword>
<keyword id="KW-0677">Repeat</keyword>
<keyword id="KW-0732">Signal</keyword>
<keyword id="KW-0812">Transmembrane</keyword>
<keyword id="KW-1133">Transmembrane helix</keyword>
<comment type="function">
    <text>May be involved in spermatogenesis and fertilization. Seems to be a non catalytic metalloprotease-like protein.</text>
</comment>
<comment type="subcellular location">
    <subcellularLocation>
        <location>Membrane</location>
        <topology>Single-pass type I membrane protein</topology>
    </subcellularLocation>
</comment>
<comment type="alternative products">
    <event type="alternative splicing"/>
    <isoform>
        <id>Q9UKF5-1</id>
        <name>Alpha</name>
        <sequence type="displayed"/>
    </isoform>
    <isoform>
        <id>Q9UKF5-2</id>
        <name>Beta</name>
        <sequence type="described" ref="VSP_005491"/>
    </isoform>
    <isoform>
        <id>Q9UKF5-3</id>
        <name>Gamma</name>
        <sequence type="described" ref="VSP_005492 VSP_005493"/>
    </isoform>
</comment>
<comment type="tissue specificity">
    <text>Expressed specifically in testes.</text>
</comment>
<comment type="disease">
    <text evidence="7">Has been found to be frequently mutated in melanoma. ADAM7 mutations may play a role in melanoma progression and metastasis.</text>
</comment>
<dbReference type="EMBL" id="AF171929">
    <property type="protein sequence ID" value="AAF03777.1"/>
    <property type="molecule type" value="mRNA"/>
</dbReference>
<dbReference type="EMBL" id="AF171930">
    <property type="protein sequence ID" value="AAF03778.1"/>
    <property type="molecule type" value="mRNA"/>
</dbReference>
<dbReference type="EMBL" id="AF171931">
    <property type="protein sequence ID" value="AAF03779.1"/>
    <property type="molecule type" value="mRNA"/>
</dbReference>
<dbReference type="EMBL" id="AF134708">
    <property type="protein sequence ID" value="AAF22163.1"/>
    <property type="molecule type" value="mRNA"/>
</dbReference>
<dbReference type="EMBL" id="AK292410">
    <property type="protein sequence ID" value="BAF85099.1"/>
    <property type="molecule type" value="mRNA"/>
</dbReference>
<dbReference type="EMBL" id="AC105914">
    <property type="protein sequence ID" value="AAY41055.1"/>
    <property type="molecule type" value="Genomic_DNA"/>
</dbReference>
<dbReference type="EMBL" id="CH471056">
    <property type="protein sequence ID" value="EAX04727.1"/>
    <property type="molecule type" value="Genomic_DNA"/>
</dbReference>
<dbReference type="EMBL" id="CH471056">
    <property type="protein sequence ID" value="EAX04728.1"/>
    <property type="molecule type" value="Genomic_DNA"/>
</dbReference>
<dbReference type="CCDS" id="CCDS3823.1">
    <molecule id="Q9UKF5-1"/>
</dbReference>
<dbReference type="RefSeq" id="NP_001124175.1">
    <molecule id="Q9UKF5-1"/>
    <property type="nucleotide sequence ID" value="NM_001130703.1"/>
</dbReference>
<dbReference type="RefSeq" id="NP_001124176.1">
    <molecule id="Q9UKF5-1"/>
    <property type="nucleotide sequence ID" value="NM_001130704.1"/>
</dbReference>
<dbReference type="RefSeq" id="NP_001124177.1">
    <molecule id="Q9UKF5-1"/>
    <property type="nucleotide sequence ID" value="NM_001130705.1"/>
</dbReference>
<dbReference type="RefSeq" id="NP_001265054.1">
    <molecule id="Q9UKF5-1"/>
    <property type="nucleotide sequence ID" value="NM_001278125.1"/>
</dbReference>
<dbReference type="RefSeq" id="NP_001265055.1">
    <molecule id="Q9UKF5-1"/>
    <property type="nucleotide sequence ID" value="NM_001278126.1"/>
</dbReference>
<dbReference type="RefSeq" id="NP_001265056.1">
    <molecule id="Q9UKF5-1"/>
    <property type="nucleotide sequence ID" value="NM_001278127.1"/>
</dbReference>
<dbReference type="RefSeq" id="NP_055084.3">
    <molecule id="Q9UKF5-1"/>
    <property type="nucleotide sequence ID" value="NM_014269.4"/>
</dbReference>
<dbReference type="RefSeq" id="XP_011529858.1">
    <molecule id="Q9UKF5-1"/>
    <property type="nucleotide sequence ID" value="XM_011531556.2"/>
</dbReference>
<dbReference type="RefSeq" id="XP_011529859.1">
    <molecule id="Q9UKF5-1"/>
    <property type="nucleotide sequence ID" value="XM_011531557.2"/>
</dbReference>
<dbReference type="RefSeq" id="XP_011529861.1">
    <molecule id="Q9UKF5-1"/>
    <property type="nucleotide sequence ID" value="XM_011531559.2"/>
</dbReference>
<dbReference type="RefSeq" id="XP_011529862.1">
    <molecule id="Q9UKF5-1"/>
    <property type="nucleotide sequence ID" value="XM_011531560.2"/>
</dbReference>
<dbReference type="RefSeq" id="XP_011529863.1">
    <molecule id="Q9UKF5-1"/>
    <property type="nucleotide sequence ID" value="XM_011531561.2"/>
</dbReference>
<dbReference type="RefSeq" id="XP_054204789.1">
    <molecule id="Q9UKF5-1"/>
    <property type="nucleotide sequence ID" value="XM_054348814.1"/>
</dbReference>
<dbReference type="RefSeq" id="XP_054204790.1">
    <molecule id="Q9UKF5-1"/>
    <property type="nucleotide sequence ID" value="XM_054348815.1"/>
</dbReference>
<dbReference type="RefSeq" id="XP_054204791.1">
    <molecule id="Q9UKF5-1"/>
    <property type="nucleotide sequence ID" value="XM_054348816.1"/>
</dbReference>
<dbReference type="RefSeq" id="XP_054204792.1">
    <molecule id="Q9UKF5-1"/>
    <property type="nucleotide sequence ID" value="XM_054348817.1"/>
</dbReference>
<dbReference type="RefSeq" id="XP_054204793.1">
    <molecule id="Q9UKF5-1"/>
    <property type="nucleotide sequence ID" value="XM_054348818.1"/>
</dbReference>
<dbReference type="RefSeq" id="XP_054204794.1">
    <molecule id="Q9UKF5-1"/>
    <property type="nucleotide sequence ID" value="XM_054348819.1"/>
</dbReference>
<dbReference type="SMR" id="Q9UKF5"/>
<dbReference type="BioGRID" id="116268">
    <property type="interactions" value="1"/>
</dbReference>
<dbReference type="FunCoup" id="Q9UKF5">
    <property type="interactions" value="13"/>
</dbReference>
<dbReference type="IntAct" id="Q9UKF5">
    <property type="interactions" value="1"/>
</dbReference>
<dbReference type="STRING" id="9606.ENSP00000484862"/>
<dbReference type="MEROPS" id="M12.981"/>
<dbReference type="GlyCosmos" id="Q9UKF5">
    <property type="glycosylation" value="9 sites, No reported glycans"/>
</dbReference>
<dbReference type="GlyGen" id="Q9UKF5">
    <property type="glycosylation" value="13 sites"/>
</dbReference>
<dbReference type="iPTMnet" id="Q9UKF5"/>
<dbReference type="PhosphoSitePlus" id="Q9UKF5"/>
<dbReference type="SwissPalm" id="Q9UKF5"/>
<dbReference type="BioMuta" id="ADAM29"/>
<dbReference type="DMDM" id="145559438"/>
<dbReference type="MassIVE" id="Q9UKF5"/>
<dbReference type="PaxDb" id="9606-ENSP00000484862"/>
<dbReference type="PeptideAtlas" id="Q9UKF5"/>
<dbReference type="ProteomicsDB" id="84779">
    <molecule id="Q9UKF5-1"/>
</dbReference>
<dbReference type="ProteomicsDB" id="84780">
    <molecule id="Q9UKF5-2"/>
</dbReference>
<dbReference type="ProteomicsDB" id="84781">
    <molecule id="Q9UKF5-3"/>
</dbReference>
<dbReference type="Antibodypedia" id="2608">
    <property type="antibodies" value="89 antibodies from 27 providers"/>
</dbReference>
<dbReference type="DNASU" id="11086"/>
<dbReference type="Ensembl" id="ENST00000359240.7">
    <molecule id="Q9UKF5-1"/>
    <property type="protein sequence ID" value="ENSP00000352177.3"/>
    <property type="gene ID" value="ENSG00000168594.15"/>
</dbReference>
<dbReference type="Ensembl" id="ENST00000404450.8">
    <molecule id="Q9UKF5-1"/>
    <property type="protein sequence ID" value="ENSP00000384229.3"/>
    <property type="gene ID" value="ENSG00000168594.15"/>
</dbReference>
<dbReference type="Ensembl" id="ENST00000445694.5">
    <molecule id="Q9UKF5-1"/>
    <property type="protein sequence ID" value="ENSP00000414544.1"/>
    <property type="gene ID" value="ENSG00000168594.15"/>
</dbReference>
<dbReference type="Ensembl" id="ENST00000514159.1">
    <molecule id="Q9UKF5-1"/>
    <property type="protein sequence ID" value="ENSP00000423517.1"/>
    <property type="gene ID" value="ENSG00000168594.15"/>
</dbReference>
<dbReference type="Ensembl" id="ENST00000615367.4">
    <molecule id="Q9UKF5-1"/>
    <property type="protein sequence ID" value="ENSP00000484862.1"/>
    <property type="gene ID" value="ENSG00000168594.15"/>
</dbReference>
<dbReference type="Ensembl" id="ENST00000618444.1">
    <molecule id="Q9UKF5-1"/>
    <property type="protein sequence ID" value="ENSP00000478469.1"/>
    <property type="gene ID" value="ENSG00000168594.15"/>
</dbReference>
<dbReference type="GeneID" id="11086"/>
<dbReference type="KEGG" id="hsa:11086"/>
<dbReference type="MANE-Select" id="ENST00000359240.7">
    <property type="protein sequence ID" value="ENSP00000352177.3"/>
    <property type="RefSeq nucleotide sequence ID" value="NM_014269.4"/>
    <property type="RefSeq protein sequence ID" value="NP_055084.3"/>
</dbReference>
<dbReference type="UCSC" id="uc003iuc.3">
    <molecule id="Q9UKF5-1"/>
    <property type="organism name" value="human"/>
</dbReference>
<dbReference type="AGR" id="HGNC:207"/>
<dbReference type="CTD" id="11086"/>
<dbReference type="DisGeNET" id="11086"/>
<dbReference type="GeneCards" id="ADAM29"/>
<dbReference type="HGNC" id="HGNC:207">
    <property type="gene designation" value="ADAM29"/>
</dbReference>
<dbReference type="HPA" id="ENSG00000168594">
    <property type="expression patterns" value="Tissue enriched (testis)"/>
</dbReference>
<dbReference type="MIM" id="604778">
    <property type="type" value="gene"/>
</dbReference>
<dbReference type="neXtProt" id="NX_Q9UKF5"/>
<dbReference type="OpenTargets" id="ENSG00000168594"/>
<dbReference type="PharmGKB" id="PA24524"/>
<dbReference type="VEuPathDB" id="HostDB:ENSG00000168594"/>
<dbReference type="eggNOG" id="KOG3607">
    <property type="taxonomic scope" value="Eukaryota"/>
</dbReference>
<dbReference type="GeneTree" id="ENSGT00940000163394"/>
<dbReference type="HOGENOM" id="CLU_012714_4_0_1"/>
<dbReference type="InParanoid" id="Q9UKF5"/>
<dbReference type="OMA" id="TSHMCPD"/>
<dbReference type="OrthoDB" id="5951731at2759"/>
<dbReference type="PAN-GO" id="Q9UKF5">
    <property type="GO annotations" value="4 GO annotations based on evolutionary models"/>
</dbReference>
<dbReference type="PhylomeDB" id="Q9UKF5"/>
<dbReference type="TreeFam" id="TF314733"/>
<dbReference type="PathwayCommons" id="Q9UKF5"/>
<dbReference type="BioGRID-ORCS" id="11086">
    <property type="hits" value="10 hits in 1148 CRISPR screens"/>
</dbReference>
<dbReference type="ChiTaRS" id="ADAM29">
    <property type="organism name" value="human"/>
</dbReference>
<dbReference type="GenomeRNAi" id="11086"/>
<dbReference type="Pharos" id="Q9UKF5">
    <property type="development level" value="Tbio"/>
</dbReference>
<dbReference type="PRO" id="PR:Q9UKF5"/>
<dbReference type="Proteomes" id="UP000005640">
    <property type="component" value="Chromosome 4"/>
</dbReference>
<dbReference type="RNAct" id="Q9UKF5">
    <property type="molecule type" value="protein"/>
</dbReference>
<dbReference type="Bgee" id="ENSG00000168594">
    <property type="expression patterns" value="Expressed in sperm and 80 other cell types or tissues"/>
</dbReference>
<dbReference type="ExpressionAtlas" id="Q9UKF5">
    <property type="expression patterns" value="baseline and differential"/>
</dbReference>
<dbReference type="GO" id="GO:0009897">
    <property type="term" value="C:external side of plasma membrane"/>
    <property type="evidence" value="ECO:0000318"/>
    <property type="project" value="GO_Central"/>
</dbReference>
<dbReference type="GO" id="GO:0005886">
    <property type="term" value="C:plasma membrane"/>
    <property type="evidence" value="ECO:0000318"/>
    <property type="project" value="GO_Central"/>
</dbReference>
<dbReference type="GO" id="GO:1990913">
    <property type="term" value="C:sperm head plasma membrane"/>
    <property type="evidence" value="ECO:0000318"/>
    <property type="project" value="GO_Central"/>
</dbReference>
<dbReference type="GO" id="GO:0004222">
    <property type="term" value="F:metalloendopeptidase activity"/>
    <property type="evidence" value="ECO:0000318"/>
    <property type="project" value="GO_Central"/>
</dbReference>
<dbReference type="GO" id="GO:0008237">
    <property type="term" value="F:metallopeptidase activity"/>
    <property type="evidence" value="ECO:0000304"/>
    <property type="project" value="ProtInc"/>
</dbReference>
<dbReference type="GO" id="GO:0008584">
    <property type="term" value="P:male gonad development"/>
    <property type="evidence" value="ECO:0000318"/>
    <property type="project" value="GO_Central"/>
</dbReference>
<dbReference type="GO" id="GO:0006508">
    <property type="term" value="P:proteolysis"/>
    <property type="evidence" value="ECO:0000318"/>
    <property type="project" value="GO_Central"/>
</dbReference>
<dbReference type="GO" id="GO:0007283">
    <property type="term" value="P:spermatogenesis"/>
    <property type="evidence" value="ECO:0000304"/>
    <property type="project" value="ProtInc"/>
</dbReference>
<dbReference type="CDD" id="cd04269">
    <property type="entry name" value="ZnMc_adamalysin_II_like"/>
    <property type="match status" value="1"/>
</dbReference>
<dbReference type="FunFam" id="3.40.390.10:FF:000002">
    <property type="entry name" value="Disintegrin and metalloproteinase domain-containing protein 22"/>
    <property type="match status" value="1"/>
</dbReference>
<dbReference type="FunFam" id="4.10.70.10:FF:000001">
    <property type="entry name" value="Disintegrin and metalloproteinase domain-containing protein 22"/>
    <property type="match status" value="1"/>
</dbReference>
<dbReference type="Gene3D" id="3.40.390.10">
    <property type="entry name" value="Collagenase (Catalytic Domain)"/>
    <property type="match status" value="1"/>
</dbReference>
<dbReference type="Gene3D" id="4.10.70.10">
    <property type="entry name" value="Disintegrin domain"/>
    <property type="match status" value="1"/>
</dbReference>
<dbReference type="InterPro" id="IPR006586">
    <property type="entry name" value="ADAM_Cys-rich"/>
</dbReference>
<dbReference type="InterPro" id="IPR018358">
    <property type="entry name" value="Disintegrin_CS"/>
</dbReference>
<dbReference type="InterPro" id="IPR001762">
    <property type="entry name" value="Disintegrin_dom"/>
</dbReference>
<dbReference type="InterPro" id="IPR036436">
    <property type="entry name" value="Disintegrin_dom_sf"/>
</dbReference>
<dbReference type="InterPro" id="IPR024079">
    <property type="entry name" value="MetalloPept_cat_dom_sf"/>
</dbReference>
<dbReference type="InterPro" id="IPR001590">
    <property type="entry name" value="Peptidase_M12B"/>
</dbReference>
<dbReference type="InterPro" id="IPR002870">
    <property type="entry name" value="Peptidase_M12B_N"/>
</dbReference>
<dbReference type="InterPro" id="IPR034027">
    <property type="entry name" value="Reprolysin_adamalysin"/>
</dbReference>
<dbReference type="PANTHER" id="PTHR11905">
    <property type="entry name" value="ADAM A DISINTEGRIN AND METALLOPROTEASE DOMAIN"/>
    <property type="match status" value="1"/>
</dbReference>
<dbReference type="PANTHER" id="PTHR11905:SF34">
    <property type="entry name" value="DISINTEGRIN AND METALLOPROTEINASE DOMAIN-CONTAINING PROTEIN 29"/>
    <property type="match status" value="1"/>
</dbReference>
<dbReference type="Pfam" id="PF08516">
    <property type="entry name" value="ADAM_CR"/>
    <property type="match status" value="1"/>
</dbReference>
<dbReference type="Pfam" id="PF00200">
    <property type="entry name" value="Disintegrin"/>
    <property type="match status" value="1"/>
</dbReference>
<dbReference type="Pfam" id="PF01562">
    <property type="entry name" value="Pep_M12B_propep"/>
    <property type="match status" value="1"/>
</dbReference>
<dbReference type="Pfam" id="PF01421">
    <property type="entry name" value="Reprolysin"/>
    <property type="match status" value="1"/>
</dbReference>
<dbReference type="PRINTS" id="PR00289">
    <property type="entry name" value="DISINTEGRIN"/>
</dbReference>
<dbReference type="SMART" id="SM00608">
    <property type="entry name" value="ACR"/>
    <property type="match status" value="1"/>
</dbReference>
<dbReference type="SMART" id="SM00050">
    <property type="entry name" value="DISIN"/>
    <property type="match status" value="1"/>
</dbReference>
<dbReference type="SUPFAM" id="SSF57552">
    <property type="entry name" value="Blood coagulation inhibitor (disintegrin)"/>
    <property type="match status" value="1"/>
</dbReference>
<dbReference type="SUPFAM" id="SSF55486">
    <property type="entry name" value="Metalloproteases ('zincins'), catalytic domain"/>
    <property type="match status" value="1"/>
</dbReference>
<dbReference type="PROSITE" id="PS50215">
    <property type="entry name" value="ADAM_MEPRO"/>
    <property type="match status" value="1"/>
</dbReference>
<dbReference type="PROSITE" id="PS00427">
    <property type="entry name" value="DISINTEGRIN_1"/>
    <property type="match status" value="1"/>
</dbReference>
<dbReference type="PROSITE" id="PS50214">
    <property type="entry name" value="DISINTEGRIN_2"/>
    <property type="match status" value="1"/>
</dbReference>
<organism>
    <name type="scientific">Homo sapiens</name>
    <name type="common">Human</name>
    <dbReference type="NCBI Taxonomy" id="9606"/>
    <lineage>
        <taxon>Eukaryota</taxon>
        <taxon>Metazoa</taxon>
        <taxon>Chordata</taxon>
        <taxon>Craniata</taxon>
        <taxon>Vertebrata</taxon>
        <taxon>Euteleostomi</taxon>
        <taxon>Mammalia</taxon>
        <taxon>Eutheria</taxon>
        <taxon>Euarchontoglires</taxon>
        <taxon>Primates</taxon>
        <taxon>Haplorrhini</taxon>
        <taxon>Catarrhini</taxon>
        <taxon>Hominidae</taxon>
        <taxon>Homo</taxon>
    </lineage>
</organism>
<evidence type="ECO:0000250" key="1"/>
<evidence type="ECO:0000255" key="2"/>
<evidence type="ECO:0000255" key="3">
    <source>
        <dbReference type="PROSITE-ProRule" id="PRU00068"/>
    </source>
</evidence>
<evidence type="ECO:0000255" key="4">
    <source>
        <dbReference type="PROSITE-ProRule" id="PRU00276"/>
    </source>
</evidence>
<evidence type="ECO:0000256" key="5">
    <source>
        <dbReference type="SAM" id="MobiDB-lite"/>
    </source>
</evidence>
<evidence type="ECO:0000269" key="6">
    <source>
    </source>
</evidence>
<evidence type="ECO:0000269" key="7">
    <source>
    </source>
</evidence>
<evidence type="ECO:0000303" key="8">
    <source>
    </source>
</evidence>
<evidence type="ECO:0000305" key="9"/>
<feature type="signal peptide" evidence="2">
    <location>
        <begin position="1"/>
        <end position="18"/>
    </location>
</feature>
<feature type="propeptide" id="PRO_0000029134" evidence="1">
    <location>
        <begin position="19"/>
        <end position="193"/>
    </location>
</feature>
<feature type="chain" id="PRO_0000029135" description="Disintegrin and metalloproteinase domain-containing protein 29">
    <location>
        <begin position="194"/>
        <end position="820"/>
    </location>
</feature>
<feature type="topological domain" description="Extracellular" evidence="2">
    <location>
        <begin position="194"/>
        <end position="674"/>
    </location>
</feature>
<feature type="transmembrane region" description="Helical" evidence="2">
    <location>
        <begin position="675"/>
        <end position="695"/>
    </location>
</feature>
<feature type="topological domain" description="Cytoplasmic" evidence="2">
    <location>
        <begin position="696"/>
        <end position="820"/>
    </location>
</feature>
<feature type="domain" description="Peptidase M12B" evidence="4">
    <location>
        <begin position="198"/>
        <end position="390"/>
    </location>
</feature>
<feature type="domain" description="Disintegrin" evidence="3">
    <location>
        <begin position="397"/>
        <end position="483"/>
    </location>
</feature>
<feature type="domain" description="EGF-like">
    <location>
        <begin position="625"/>
        <end position="654"/>
    </location>
</feature>
<feature type="repeat" description="1">
    <location>
        <begin position="739"/>
        <end position="747"/>
    </location>
</feature>
<feature type="repeat" description="2">
    <location>
        <begin position="748"/>
        <end position="756"/>
    </location>
</feature>
<feature type="repeat" description="3">
    <location>
        <begin position="757"/>
        <end position="765"/>
    </location>
</feature>
<feature type="repeat" description="4">
    <location>
        <begin position="766"/>
        <end position="774"/>
    </location>
</feature>
<feature type="repeat" description="5">
    <location>
        <begin position="775"/>
        <end position="783"/>
    </location>
</feature>
<feature type="repeat" description="6">
    <location>
        <begin position="784"/>
        <end position="792"/>
    </location>
</feature>
<feature type="repeat" description="7">
    <location>
        <begin position="793"/>
        <end position="801"/>
    </location>
</feature>
<feature type="repeat" description="8">
    <location>
        <begin position="802"/>
        <end position="810"/>
    </location>
</feature>
<feature type="repeat" description="9">
    <location>
        <begin position="811"/>
        <end position="819"/>
    </location>
</feature>
<feature type="region of interest" description="Disordered" evidence="5">
    <location>
        <begin position="706"/>
        <end position="820"/>
    </location>
</feature>
<feature type="region of interest" description="9 X 9 AA approximate repeats">
    <location>
        <begin position="739"/>
        <end position="819"/>
    </location>
</feature>
<feature type="compositionally biased region" description="Basic and acidic residues" evidence="5">
    <location>
        <begin position="715"/>
        <end position="727"/>
    </location>
</feature>
<feature type="compositionally biased region" description="Low complexity" evidence="5">
    <location>
        <begin position="738"/>
        <end position="820"/>
    </location>
</feature>
<feature type="glycosylation site" description="N-linked (GlcNAc...) asparagine" evidence="2">
    <location>
        <position position="217"/>
    </location>
</feature>
<feature type="glycosylation site" description="N-linked (GlcNAc...) asparagine" evidence="2">
    <location>
        <position position="320"/>
    </location>
</feature>
<feature type="glycosylation site" description="N-linked (GlcNAc...) asparagine" evidence="2">
    <location>
        <position position="368"/>
    </location>
</feature>
<feature type="glycosylation site" description="N-linked (GlcNAc...) asparagine" evidence="2">
    <location>
        <position position="428"/>
    </location>
</feature>
<feature type="glycosylation site" description="N-linked (GlcNAc...) asparagine" evidence="2">
    <location>
        <position position="469"/>
    </location>
</feature>
<feature type="glycosylation site" description="N-linked (GlcNAc...) asparagine" evidence="2">
    <location>
        <position position="538"/>
    </location>
</feature>
<feature type="glycosylation site" description="N-linked (GlcNAc...) asparagine" evidence="2">
    <location>
        <position position="545"/>
    </location>
</feature>
<feature type="glycosylation site" description="N-linked (GlcNAc...) asparagine" evidence="2">
    <location>
        <position position="558"/>
    </location>
</feature>
<feature type="glycosylation site" description="N-linked (GlcNAc...) asparagine" evidence="2">
    <location>
        <position position="564"/>
    </location>
</feature>
<feature type="disulfide bond" evidence="1">
    <location>
        <begin position="307"/>
        <end position="384"/>
    </location>
</feature>
<feature type="disulfide bond" evidence="1">
    <location>
        <begin position="347"/>
        <end position="369"/>
    </location>
</feature>
<feature type="disulfide bond" evidence="1">
    <location>
        <begin position="349"/>
        <end position="354"/>
    </location>
</feature>
<feature type="disulfide bond" evidence="1">
    <location>
        <begin position="455"/>
        <end position="475"/>
    </location>
</feature>
<feature type="disulfide bond" evidence="1">
    <location>
        <begin position="625"/>
        <end position="636"/>
    </location>
</feature>
<feature type="disulfide bond" evidence="1">
    <location>
        <begin position="630"/>
        <end position="642"/>
    </location>
</feature>
<feature type="disulfide bond" evidence="1">
    <location>
        <begin position="644"/>
        <end position="653"/>
    </location>
</feature>
<feature type="splice variant" id="VSP_005491" description="In isoform Beta." evidence="8">
    <location>
        <begin position="750"/>
        <end position="803"/>
    </location>
</feature>
<feature type="splice variant" id="VSP_005492" description="In isoform Gamma." evidence="8">
    <original>VTPSQSQPRVMPSQSQPPVMPSQSH</original>
    <variation>QNLFLFSFSISDCVLNFRLLYLQAT</variation>
    <location>
        <begin position="763"/>
        <end position="787"/>
    </location>
</feature>
<feature type="splice variant" id="VSP_005493" description="In isoform Gamma." evidence="8">
    <location>
        <begin position="788"/>
        <end position="820"/>
    </location>
</feature>
<feature type="sequence variant" id="VAR_036148" description="In a colorectal cancer sample; somatic mutation; dbSNP:rs544557652." evidence="6">
    <original>P</original>
    <variation>L</variation>
    <location>
        <position position="31"/>
    </location>
</feature>
<feature type="sequence variant" id="VAR_066322" description="In a melanoma cell line." evidence="7">
    <original>L</original>
    <variation>F</variation>
    <location>
        <position position="72"/>
    </location>
</feature>
<feature type="sequence variant" id="VAR_066323" description="In a cutaneous metastatic melanoma sample; somatic mutation." evidence="7">
    <original>I</original>
    <variation>M</variation>
    <location>
        <position position="89"/>
    </location>
</feature>
<feature type="sequence variant" id="VAR_066324" description="In a cutaneous metastatic melanoma sample; somatic mutation; increases the adhesion of melanoma cells to collagens I and IV; dbSNP:rs267600087." evidence="7">
    <original>E</original>
    <variation>K</variation>
    <location>
        <position position="111"/>
    </location>
</feature>
<feature type="sequence variant" id="VAR_066325" description="In a cutaneous metastatic melanoma sample; somatic mutation; increases the adhesion of melanoma cells to collagens I and IV." evidence="7">
    <original>S</original>
    <variation>F</variation>
    <location>
        <position position="112"/>
    </location>
</feature>
<feature type="sequence variant" id="VAR_066326" description="In a cutaneous metastatic melanoma sample; somatic mutation; increases the adhesion of melanoma cells to collagens I and IV." evidence="7">
    <original>S</original>
    <variation>F</variation>
    <location>
        <position position="115"/>
    </location>
</feature>
<feature type="sequence variant" id="VAR_066327" description="In a cutaneous metastatic melanoma sample; somatic mutation." evidence="7">
    <original>D</original>
    <variation>N</variation>
    <location>
        <position position="131"/>
    </location>
</feature>
<feature type="sequence variant" id="VAR_066328" description="In a cutaneous metastatic melanoma sample; somatic mutation; dbSNP:rs899870236." evidence="7">
    <original>E</original>
    <variation>K</variation>
    <location>
        <position position="176"/>
    </location>
</feature>
<feature type="sequence variant" id="VAR_036149" description="In a colorectal cancer sample; somatic mutation; dbSNP:rs772388824." evidence="6">
    <original>V</original>
    <variation>I</variation>
    <location>
        <position position="205"/>
    </location>
</feature>
<feature type="sequence variant" id="VAR_066329" description="In a cutaneous metastatic melanoma sample; somatic mutation; dbSNP:rs866380131." evidence="7">
    <original>S</original>
    <variation>F</variation>
    <location>
        <position position="234"/>
    </location>
</feature>
<feature type="sequence variant" id="VAR_066330" description="In a cutaneous metastatic melanoma sample; somatic mutation; increases the adhesion of melanoma cells to collagens I and IV; dbSNP:rs140083180." evidence="7">
    <original>I</original>
    <variation>F</variation>
    <location>
        <position position="257"/>
    </location>
</feature>
<feature type="sequence variant" id="VAR_066331" description="In a cutaneous metastatic melanoma sample; somatic mutation; dbSNP:rs267600089." evidence="7">
    <original>G</original>
    <variation>E</variation>
    <location>
        <position position="305"/>
    </location>
</feature>
<feature type="sequence variant" id="VAR_066332" description="In a cutaneous metastatic melanoma sample; somatic mutation; dbSNP:rs267600090." evidence="7">
    <original>D</original>
    <variation>N</variation>
    <location>
        <position position="345"/>
    </location>
</feature>
<feature type="sequence variant" id="VAR_066333" description="In a cutaneous metastatic melanoma sample; somatic mutation; dbSNP:rs150047888." evidence="7">
    <original>G</original>
    <variation>D</variation>
    <location>
        <position position="403"/>
    </location>
</feature>
<feature type="sequence variant" id="VAR_066334" description="In a cutaneous metastatic melanoma sample; somatic mutation; increases the adhesion of melanoma cells to collagens I and IV; dbSNP:rs267600091." evidence="7">
    <original>G</original>
    <variation>D</variation>
    <location>
        <position position="434"/>
    </location>
</feature>
<feature type="sequence variant" id="VAR_066335" description="In a cutaneous metastatic melanoma sample; somatic mutation; increases the adhesion of melanoma cells to collagens I and IV." evidence="7">
    <original>E</original>
    <variation>K</variation>
    <location>
        <position position="503"/>
    </location>
</feature>
<feature type="sequence variant" id="VAR_066336" description="In a cutaneous metastatic melanoma sample; somatic mutation; dbSNP:rs267600093." evidence="7">
    <original>H</original>
    <variation>Y</variation>
    <location>
        <position position="533"/>
    </location>
</feature>
<feature type="sequence conflict" description="In Ref. 2; AAF22163." evidence="9" ref="2">
    <original>H</original>
    <variation>Y</variation>
    <location>
        <position position="196"/>
    </location>
</feature>
<feature type="sequence conflict" description="In Ref. 2; AAF22163." evidence="9" ref="2">
    <original>P</original>
    <variation>H</variation>
    <location>
        <position position="744"/>
    </location>
</feature>
<feature type="sequence conflict" description="In Ref. 2; AAF22163." evidence="9" ref="2">
    <original>S</original>
    <variation>Y</variation>
    <location>
        <position position="748"/>
    </location>
</feature>
<feature type="sequence conflict" description="In Ref. 1; AAF03777." evidence="9" ref="1">
    <original>Q</original>
    <variation>R</variation>
    <location>
        <position position="753"/>
    </location>
</feature>
<feature type="sequence conflict" description="In Ref. 1; AAF03777." evidence="9" ref="1">
    <original>T</original>
    <variation>M</variation>
    <location>
        <position position="764"/>
    </location>
</feature>
<feature type="sequence conflict" description="In Ref. 1; AAF03777." evidence="9" ref="1">
    <original>QPRVM</original>
    <variation>HPQLT</variation>
    <location>
        <begin position="769"/>
        <end position="773"/>
    </location>
</feature>
<accession>Q9UKF5</accession>
<accession>Q4W5F3</accession>
<accession>Q9UHP1</accession>
<accession>Q9UKF3</accession>
<accession>Q9UKF4</accession>
<reference key="1">
    <citation type="journal article" date="1999" name="Biochem. Biophys. Res. Commun.">
        <title>Isolation of two novel metalloproteinase-disintegrin (ADAM) cDNAs that show testis-specific gene expression.</title>
        <authorList>
            <person name="Cerretti D.P."/>
            <person name="DuBose R.F."/>
            <person name="Black R.A."/>
            <person name="Nelson N."/>
        </authorList>
    </citation>
    <scope>NUCLEOTIDE SEQUENCE [MRNA] (ISOFORMS ALPHA; BETA AND GAMMA)</scope>
    <source>
        <tissue>Testis</tissue>
    </source>
</reference>
<reference key="2">
    <citation type="journal article" date="1999" name="Genomics">
        <title>Molecular cloning and mapping of a novel ADAM gene (ADAM29) to human chromosome 4.</title>
        <authorList>
            <person name="Xu R."/>
            <person name="Cai J."/>
            <person name="Xu T."/>
            <person name="Zhou W."/>
            <person name="Ying B."/>
            <person name="Deng K."/>
            <person name="Zhao S."/>
            <person name="Li C."/>
        </authorList>
    </citation>
    <scope>NUCLEOTIDE SEQUENCE [MRNA] (ISOFORM ALPHA)</scope>
    <source>
        <tissue>Testis</tissue>
    </source>
</reference>
<reference key="3">
    <citation type="journal article" date="2004" name="Nat. Genet.">
        <title>Complete sequencing and characterization of 21,243 full-length human cDNAs.</title>
        <authorList>
            <person name="Ota T."/>
            <person name="Suzuki Y."/>
            <person name="Nishikawa T."/>
            <person name="Otsuki T."/>
            <person name="Sugiyama T."/>
            <person name="Irie R."/>
            <person name="Wakamatsu A."/>
            <person name="Hayashi K."/>
            <person name="Sato H."/>
            <person name="Nagai K."/>
            <person name="Kimura K."/>
            <person name="Makita H."/>
            <person name="Sekine M."/>
            <person name="Obayashi M."/>
            <person name="Nishi T."/>
            <person name="Shibahara T."/>
            <person name="Tanaka T."/>
            <person name="Ishii S."/>
            <person name="Yamamoto J."/>
            <person name="Saito K."/>
            <person name="Kawai Y."/>
            <person name="Isono Y."/>
            <person name="Nakamura Y."/>
            <person name="Nagahari K."/>
            <person name="Murakami K."/>
            <person name="Yasuda T."/>
            <person name="Iwayanagi T."/>
            <person name="Wagatsuma M."/>
            <person name="Shiratori A."/>
            <person name="Sudo H."/>
            <person name="Hosoiri T."/>
            <person name="Kaku Y."/>
            <person name="Kodaira H."/>
            <person name="Kondo H."/>
            <person name="Sugawara M."/>
            <person name="Takahashi M."/>
            <person name="Kanda K."/>
            <person name="Yokoi T."/>
            <person name="Furuya T."/>
            <person name="Kikkawa E."/>
            <person name="Omura Y."/>
            <person name="Abe K."/>
            <person name="Kamihara K."/>
            <person name="Katsuta N."/>
            <person name="Sato K."/>
            <person name="Tanikawa M."/>
            <person name="Yamazaki M."/>
            <person name="Ninomiya K."/>
            <person name="Ishibashi T."/>
            <person name="Yamashita H."/>
            <person name="Murakawa K."/>
            <person name="Fujimori K."/>
            <person name="Tanai H."/>
            <person name="Kimata M."/>
            <person name="Watanabe M."/>
            <person name="Hiraoka S."/>
            <person name="Chiba Y."/>
            <person name="Ishida S."/>
            <person name="Ono Y."/>
            <person name="Takiguchi S."/>
            <person name="Watanabe S."/>
            <person name="Yosida M."/>
            <person name="Hotuta T."/>
            <person name="Kusano J."/>
            <person name="Kanehori K."/>
            <person name="Takahashi-Fujii A."/>
            <person name="Hara H."/>
            <person name="Tanase T.-O."/>
            <person name="Nomura Y."/>
            <person name="Togiya S."/>
            <person name="Komai F."/>
            <person name="Hara R."/>
            <person name="Takeuchi K."/>
            <person name="Arita M."/>
            <person name="Imose N."/>
            <person name="Musashino K."/>
            <person name="Yuuki H."/>
            <person name="Oshima A."/>
            <person name="Sasaki N."/>
            <person name="Aotsuka S."/>
            <person name="Yoshikawa Y."/>
            <person name="Matsunawa H."/>
            <person name="Ichihara T."/>
            <person name="Shiohata N."/>
            <person name="Sano S."/>
            <person name="Moriya S."/>
            <person name="Momiyama H."/>
            <person name="Satoh N."/>
            <person name="Takami S."/>
            <person name="Terashima Y."/>
            <person name="Suzuki O."/>
            <person name="Nakagawa S."/>
            <person name="Senoh A."/>
            <person name="Mizoguchi H."/>
            <person name="Goto Y."/>
            <person name="Shimizu F."/>
            <person name="Wakebe H."/>
            <person name="Hishigaki H."/>
            <person name="Watanabe T."/>
            <person name="Sugiyama A."/>
            <person name="Takemoto M."/>
            <person name="Kawakami B."/>
            <person name="Yamazaki M."/>
            <person name="Watanabe K."/>
            <person name="Kumagai A."/>
            <person name="Itakura S."/>
            <person name="Fukuzumi Y."/>
            <person name="Fujimori Y."/>
            <person name="Komiyama M."/>
            <person name="Tashiro H."/>
            <person name="Tanigami A."/>
            <person name="Fujiwara T."/>
            <person name="Ono T."/>
            <person name="Yamada K."/>
            <person name="Fujii Y."/>
            <person name="Ozaki K."/>
            <person name="Hirao M."/>
            <person name="Ohmori Y."/>
            <person name="Kawabata A."/>
            <person name="Hikiji T."/>
            <person name="Kobatake N."/>
            <person name="Inagaki H."/>
            <person name="Ikema Y."/>
            <person name="Okamoto S."/>
            <person name="Okitani R."/>
            <person name="Kawakami T."/>
            <person name="Noguchi S."/>
            <person name="Itoh T."/>
            <person name="Shigeta K."/>
            <person name="Senba T."/>
            <person name="Matsumura K."/>
            <person name="Nakajima Y."/>
            <person name="Mizuno T."/>
            <person name="Morinaga M."/>
            <person name="Sasaki M."/>
            <person name="Togashi T."/>
            <person name="Oyama M."/>
            <person name="Hata H."/>
            <person name="Watanabe M."/>
            <person name="Komatsu T."/>
            <person name="Mizushima-Sugano J."/>
            <person name="Satoh T."/>
            <person name="Shirai Y."/>
            <person name="Takahashi Y."/>
            <person name="Nakagawa K."/>
            <person name="Okumura K."/>
            <person name="Nagase T."/>
            <person name="Nomura N."/>
            <person name="Kikuchi H."/>
            <person name="Masuho Y."/>
            <person name="Yamashita R."/>
            <person name="Nakai K."/>
            <person name="Yada T."/>
            <person name="Nakamura Y."/>
            <person name="Ohara O."/>
            <person name="Isogai T."/>
            <person name="Sugano S."/>
        </authorList>
    </citation>
    <scope>NUCLEOTIDE SEQUENCE [LARGE SCALE MRNA] (ISOFORM ALPHA)</scope>
    <source>
        <tissue>Testis</tissue>
    </source>
</reference>
<reference key="4">
    <citation type="journal article" date="2005" name="Nature">
        <title>Generation and annotation of the DNA sequences of human chromosomes 2 and 4.</title>
        <authorList>
            <person name="Hillier L.W."/>
            <person name="Graves T.A."/>
            <person name="Fulton R.S."/>
            <person name="Fulton L.A."/>
            <person name="Pepin K.H."/>
            <person name="Minx P."/>
            <person name="Wagner-McPherson C."/>
            <person name="Layman D."/>
            <person name="Wylie K."/>
            <person name="Sekhon M."/>
            <person name="Becker M.C."/>
            <person name="Fewell G.A."/>
            <person name="Delehaunty K.D."/>
            <person name="Miner T.L."/>
            <person name="Nash W.E."/>
            <person name="Kremitzki C."/>
            <person name="Oddy L."/>
            <person name="Du H."/>
            <person name="Sun H."/>
            <person name="Bradshaw-Cordum H."/>
            <person name="Ali J."/>
            <person name="Carter J."/>
            <person name="Cordes M."/>
            <person name="Harris A."/>
            <person name="Isak A."/>
            <person name="van Brunt A."/>
            <person name="Nguyen C."/>
            <person name="Du F."/>
            <person name="Courtney L."/>
            <person name="Kalicki J."/>
            <person name="Ozersky P."/>
            <person name="Abbott S."/>
            <person name="Armstrong J."/>
            <person name="Belter E.A."/>
            <person name="Caruso L."/>
            <person name="Cedroni M."/>
            <person name="Cotton M."/>
            <person name="Davidson T."/>
            <person name="Desai A."/>
            <person name="Elliott G."/>
            <person name="Erb T."/>
            <person name="Fronick C."/>
            <person name="Gaige T."/>
            <person name="Haakenson W."/>
            <person name="Haglund K."/>
            <person name="Holmes A."/>
            <person name="Harkins R."/>
            <person name="Kim K."/>
            <person name="Kruchowski S.S."/>
            <person name="Strong C.M."/>
            <person name="Grewal N."/>
            <person name="Goyea E."/>
            <person name="Hou S."/>
            <person name="Levy A."/>
            <person name="Martinka S."/>
            <person name="Mead K."/>
            <person name="McLellan M.D."/>
            <person name="Meyer R."/>
            <person name="Randall-Maher J."/>
            <person name="Tomlinson C."/>
            <person name="Dauphin-Kohlberg S."/>
            <person name="Kozlowicz-Reilly A."/>
            <person name="Shah N."/>
            <person name="Swearengen-Shahid S."/>
            <person name="Snider J."/>
            <person name="Strong J.T."/>
            <person name="Thompson J."/>
            <person name="Yoakum M."/>
            <person name="Leonard S."/>
            <person name="Pearman C."/>
            <person name="Trani L."/>
            <person name="Radionenko M."/>
            <person name="Waligorski J.E."/>
            <person name="Wang C."/>
            <person name="Rock S.M."/>
            <person name="Tin-Wollam A.-M."/>
            <person name="Maupin R."/>
            <person name="Latreille P."/>
            <person name="Wendl M.C."/>
            <person name="Yang S.-P."/>
            <person name="Pohl C."/>
            <person name="Wallis J.W."/>
            <person name="Spieth J."/>
            <person name="Bieri T.A."/>
            <person name="Berkowicz N."/>
            <person name="Nelson J.O."/>
            <person name="Osborne J."/>
            <person name="Ding L."/>
            <person name="Meyer R."/>
            <person name="Sabo A."/>
            <person name="Shotland Y."/>
            <person name="Sinha P."/>
            <person name="Wohldmann P.E."/>
            <person name="Cook L.L."/>
            <person name="Hickenbotham M.T."/>
            <person name="Eldred J."/>
            <person name="Williams D."/>
            <person name="Jones T.A."/>
            <person name="She X."/>
            <person name="Ciccarelli F.D."/>
            <person name="Izaurralde E."/>
            <person name="Taylor J."/>
            <person name="Schmutz J."/>
            <person name="Myers R.M."/>
            <person name="Cox D.R."/>
            <person name="Huang X."/>
            <person name="McPherson J.D."/>
            <person name="Mardis E.R."/>
            <person name="Clifton S.W."/>
            <person name="Warren W.C."/>
            <person name="Chinwalla A.T."/>
            <person name="Eddy S.R."/>
            <person name="Marra M.A."/>
            <person name="Ovcharenko I."/>
            <person name="Furey T.S."/>
            <person name="Miller W."/>
            <person name="Eichler E.E."/>
            <person name="Bork P."/>
            <person name="Suyama M."/>
            <person name="Torrents D."/>
            <person name="Waterston R.H."/>
            <person name="Wilson R.K."/>
        </authorList>
    </citation>
    <scope>NUCLEOTIDE SEQUENCE [LARGE SCALE GENOMIC DNA]</scope>
</reference>
<reference key="5">
    <citation type="submission" date="2005-09" db="EMBL/GenBank/DDBJ databases">
        <authorList>
            <person name="Mural R.J."/>
            <person name="Istrail S."/>
            <person name="Sutton G."/>
            <person name="Florea L."/>
            <person name="Halpern A.L."/>
            <person name="Mobarry C.M."/>
            <person name="Lippert R."/>
            <person name="Walenz B."/>
            <person name="Shatkay H."/>
            <person name="Dew I."/>
            <person name="Miller J.R."/>
            <person name="Flanigan M.J."/>
            <person name="Edwards N.J."/>
            <person name="Bolanos R."/>
            <person name="Fasulo D."/>
            <person name="Halldorsson B.V."/>
            <person name="Hannenhalli S."/>
            <person name="Turner R."/>
            <person name="Yooseph S."/>
            <person name="Lu F."/>
            <person name="Nusskern D.R."/>
            <person name="Shue B.C."/>
            <person name="Zheng X.H."/>
            <person name="Zhong F."/>
            <person name="Delcher A.L."/>
            <person name="Huson D.H."/>
            <person name="Kravitz S.A."/>
            <person name="Mouchard L."/>
            <person name="Reinert K."/>
            <person name="Remington K.A."/>
            <person name="Clark A.G."/>
            <person name="Waterman M.S."/>
            <person name="Eichler E.E."/>
            <person name="Adams M.D."/>
            <person name="Hunkapiller M.W."/>
            <person name="Myers E.W."/>
            <person name="Venter J.C."/>
        </authorList>
    </citation>
    <scope>NUCLEOTIDE SEQUENCE [LARGE SCALE GENOMIC DNA]</scope>
</reference>
<reference key="6">
    <citation type="journal article" date="2011" name="Hum. Mutat.">
        <title>Analysis of the disintegrin-metalloproteinases family reveals ADAM29 and ADAM7 are often mutated in melanoma.</title>
        <authorList>
            <person name="Wei X."/>
            <person name="Moncada-Pazos A."/>
            <person name="Cal S."/>
            <person name="Soria-Valles C."/>
            <person name="Gartner J."/>
            <person name="Rudloff U."/>
            <person name="Lin J.C."/>
            <person name="Rosenberg S.A."/>
            <person name="Lopez-Otin C."/>
            <person name="Samuels Y."/>
        </authorList>
    </citation>
    <scope>INVOLVEMENT IN CUTANEOUS MELANOMA</scope>
    <scope>VARIANTS PHE-72; MET-89; LYS-111; PHE-112; PHE-115; ASN-131; LYS-176; PHE-234; PHE-257; GLU-305; ASN-345; ASP-403; ASP-434; LYS-503 AND TYR-533</scope>
    <scope>CHARACTERIZATION OF VARIANTS LYS-111; PHE-112; PHE-115; PHE-257; ASP-434 AND LYS-503</scope>
</reference>
<reference key="7">
    <citation type="journal article" date="2006" name="Science">
        <title>The consensus coding sequences of human breast and colorectal cancers.</title>
        <authorList>
            <person name="Sjoeblom T."/>
            <person name="Jones S."/>
            <person name="Wood L.D."/>
            <person name="Parsons D.W."/>
            <person name="Lin J."/>
            <person name="Barber T.D."/>
            <person name="Mandelker D."/>
            <person name="Leary R.J."/>
            <person name="Ptak J."/>
            <person name="Silliman N."/>
            <person name="Szabo S."/>
            <person name="Buckhaults P."/>
            <person name="Farrell C."/>
            <person name="Meeh P."/>
            <person name="Markowitz S.D."/>
            <person name="Willis J."/>
            <person name="Dawson D."/>
            <person name="Willson J.K.V."/>
            <person name="Gazdar A.F."/>
            <person name="Hartigan J."/>
            <person name="Wu L."/>
            <person name="Liu C."/>
            <person name="Parmigiani G."/>
            <person name="Park B.H."/>
            <person name="Bachman K.E."/>
            <person name="Papadopoulos N."/>
            <person name="Vogelstein B."/>
            <person name="Kinzler K.W."/>
            <person name="Velculescu V.E."/>
        </authorList>
    </citation>
    <scope>VARIANTS [LARGE SCALE ANALYSIS] LEU-31 AND ILE-205</scope>
</reference>